<feature type="chain" id="PRO_1000065793" description="Regulator of sigma D">
    <location>
        <begin position="1"/>
        <end position="158"/>
    </location>
</feature>
<keyword id="KW-0963">Cytoplasm</keyword>
<keyword id="KW-1185">Reference proteome</keyword>
<keyword id="KW-0804">Transcription</keyword>
<keyword id="KW-0805">Transcription regulation</keyword>
<comment type="function">
    <text evidence="1">Binds RpoD and negatively regulates RpoD-mediated transcription activation by preventing the interaction between the primary sigma factor RpoD with the catalytic core of the RNA polymerase and with promoter DNA. May be involved in replacement of the RNA polymerase sigma subunit from RpoD to RpoS during the transition from exponential growth to the stationary phase.</text>
</comment>
<comment type="subunit">
    <text evidence="1">Interacts with RpoD.</text>
</comment>
<comment type="subcellular location">
    <subcellularLocation>
        <location evidence="1">Cytoplasm</location>
    </subcellularLocation>
</comment>
<comment type="similarity">
    <text evidence="1">Belongs to the Rsd/AlgQ family.</text>
</comment>
<name>RSD_ECO24</name>
<gene>
    <name evidence="1" type="primary">rsd</name>
    <name type="ordered locus">EcE24377A_4537</name>
</gene>
<reference key="1">
    <citation type="journal article" date="2008" name="J. Bacteriol.">
        <title>The pangenome structure of Escherichia coli: comparative genomic analysis of E. coli commensal and pathogenic isolates.</title>
        <authorList>
            <person name="Rasko D.A."/>
            <person name="Rosovitz M.J."/>
            <person name="Myers G.S.A."/>
            <person name="Mongodin E.F."/>
            <person name="Fricke W.F."/>
            <person name="Gajer P."/>
            <person name="Crabtree J."/>
            <person name="Sebaihia M."/>
            <person name="Thomson N.R."/>
            <person name="Chaudhuri R."/>
            <person name="Henderson I.R."/>
            <person name="Sperandio V."/>
            <person name="Ravel J."/>
        </authorList>
    </citation>
    <scope>NUCLEOTIDE SEQUENCE [LARGE SCALE GENOMIC DNA]</scope>
    <source>
        <strain>E24377A / ETEC</strain>
    </source>
</reference>
<organism>
    <name type="scientific">Escherichia coli O139:H28 (strain E24377A / ETEC)</name>
    <dbReference type="NCBI Taxonomy" id="331111"/>
    <lineage>
        <taxon>Bacteria</taxon>
        <taxon>Pseudomonadati</taxon>
        <taxon>Pseudomonadota</taxon>
        <taxon>Gammaproteobacteria</taxon>
        <taxon>Enterobacterales</taxon>
        <taxon>Enterobacteriaceae</taxon>
        <taxon>Escherichia</taxon>
    </lineage>
</organism>
<protein>
    <recommendedName>
        <fullName evidence="1">Regulator of sigma D</fullName>
    </recommendedName>
</protein>
<dbReference type="EMBL" id="CP000800">
    <property type="protein sequence ID" value="ABV19438.1"/>
    <property type="molecule type" value="Genomic_DNA"/>
</dbReference>
<dbReference type="RefSeq" id="WP_000934302.1">
    <property type="nucleotide sequence ID" value="NC_009801.1"/>
</dbReference>
<dbReference type="SMR" id="A7ZUL0"/>
<dbReference type="GeneID" id="75205513"/>
<dbReference type="KEGG" id="ecw:EcE24377A_4537"/>
<dbReference type="HOGENOM" id="CLU_142729_0_0_6"/>
<dbReference type="Proteomes" id="UP000001122">
    <property type="component" value="Chromosome"/>
</dbReference>
<dbReference type="GO" id="GO:0005737">
    <property type="term" value="C:cytoplasm"/>
    <property type="evidence" value="ECO:0007669"/>
    <property type="project" value="UniProtKB-SubCell"/>
</dbReference>
<dbReference type="GO" id="GO:0006355">
    <property type="term" value="P:regulation of DNA-templated transcription"/>
    <property type="evidence" value="ECO:0007669"/>
    <property type="project" value="InterPro"/>
</dbReference>
<dbReference type="FunFam" id="1.20.120.1370:FF:000001">
    <property type="entry name" value="Regulator of sigma D"/>
    <property type="match status" value="1"/>
</dbReference>
<dbReference type="Gene3D" id="1.20.120.1370">
    <property type="entry name" value="Regulator of RNA polymerase sigma(70) subunit, domain 4"/>
    <property type="match status" value="1"/>
</dbReference>
<dbReference type="HAMAP" id="MF_01181">
    <property type="entry name" value="Rsd"/>
    <property type="match status" value="1"/>
</dbReference>
<dbReference type="InterPro" id="IPR038309">
    <property type="entry name" value="Rsd/AlgQ_sf"/>
</dbReference>
<dbReference type="InterPro" id="IPR023785">
    <property type="entry name" value="Sigma70_reg_Rsd"/>
</dbReference>
<dbReference type="InterPro" id="IPR007448">
    <property type="entry name" value="Sigma70_reg_Rsd_AlgQ"/>
</dbReference>
<dbReference type="NCBIfam" id="NF008723">
    <property type="entry name" value="PRK11718.1"/>
    <property type="match status" value="1"/>
</dbReference>
<dbReference type="Pfam" id="PF04353">
    <property type="entry name" value="Rsd_AlgQ"/>
    <property type="match status" value="1"/>
</dbReference>
<dbReference type="PIRSF" id="PIRSF016548">
    <property type="entry name" value="Rsd_AlgQ"/>
    <property type="match status" value="1"/>
</dbReference>
<evidence type="ECO:0000255" key="1">
    <source>
        <dbReference type="HAMAP-Rule" id="MF_01181"/>
    </source>
</evidence>
<sequence>MLNQLDNLTERVRGSNKLVDRWLHVRKHLLVAYYNLVGIKPGKESYMRLNEKALDDFCQSLVDYLSAGHFSIYERILHKLEGNGQLARAAKIWPQLEANTQQIMDYYDSSLETAIDHDNYLEFQQVLSDIGEALEARFVLEDKLILLVLDAARVKHPA</sequence>
<accession>A7ZUL0</accession>
<proteinExistence type="inferred from homology"/>